<organism>
    <name type="scientific">Salmonella typhi</name>
    <dbReference type="NCBI Taxonomy" id="90370"/>
    <lineage>
        <taxon>Bacteria</taxon>
        <taxon>Pseudomonadati</taxon>
        <taxon>Pseudomonadota</taxon>
        <taxon>Gammaproteobacteria</taxon>
        <taxon>Enterobacterales</taxon>
        <taxon>Enterobacteriaceae</taxon>
        <taxon>Salmonella</taxon>
    </lineage>
</organism>
<evidence type="ECO:0000250" key="1"/>
<evidence type="ECO:0000255" key="2"/>
<evidence type="ECO:0000305" key="3"/>
<feature type="chain" id="PRO_0000109517" description="Signal peptidase I">
    <location>
        <begin position="1"/>
        <end position="324"/>
    </location>
</feature>
<feature type="topological domain" description="Periplasmic" evidence="2">
    <location>
        <begin position="1"/>
        <end position="3"/>
    </location>
</feature>
<feature type="transmembrane region" description="Helical" evidence="2">
    <location>
        <begin position="4"/>
        <end position="22"/>
    </location>
</feature>
<feature type="topological domain" description="Cytoplasmic" evidence="2">
    <location>
        <begin position="23"/>
        <end position="58"/>
    </location>
</feature>
<feature type="transmembrane region" description="Helical" evidence="2">
    <location>
        <begin position="59"/>
        <end position="77"/>
    </location>
</feature>
<feature type="topological domain" description="Periplasmic" evidence="2">
    <location>
        <begin position="78"/>
        <end position="324"/>
    </location>
</feature>
<feature type="active site" evidence="1">
    <location>
        <position position="91"/>
    </location>
</feature>
<feature type="active site" evidence="1">
    <location>
        <position position="146"/>
    </location>
</feature>
<sequence length="324" mass="35778">MANMFALILVIATLVTGILWCVDKFVFAPKRRARQAAAQTASGDALDNATLNKVAPKPGWLETGASVFPVLAIVLIVRSFLYEPFQIPSGSMMPTLLIGDFILVEKFAYGIKDPIYQKTLIETGHPKRGDIVVFKYPEDPKLDYIKRAVGLPGDKITYDPVAKEVTIQPGCSSGQACENALPVTYSNVEPSDFVQTFARRNGGEATSGFFEVPLNETKENGIRLTERKETLGDVTHRILMVPIAQDQLGMYYQQPGQPLATWVVPPGQYFMMGDNRDNSADSRYWGFVPEANLVGKAVAIWMSFDKQEGEWPTGVRLSRIGGIH</sequence>
<dbReference type="EC" id="3.4.21.89"/>
<dbReference type="EMBL" id="AL513382">
    <property type="protein sequence ID" value="CAD02784.1"/>
    <property type="molecule type" value="Genomic_DNA"/>
</dbReference>
<dbReference type="EMBL" id="AE014613">
    <property type="protein sequence ID" value="AAO68000.1"/>
    <property type="molecule type" value="Genomic_DNA"/>
</dbReference>
<dbReference type="RefSeq" id="NP_457111.1">
    <property type="nucleotide sequence ID" value="NC_003198.1"/>
</dbReference>
<dbReference type="RefSeq" id="WP_000002559.1">
    <property type="nucleotide sequence ID" value="NZ_WSUR01000007.1"/>
</dbReference>
<dbReference type="SMR" id="P0A1W3"/>
<dbReference type="STRING" id="220341.gene:17586718"/>
<dbReference type="MEROPS" id="S26.001"/>
<dbReference type="KEGG" id="stt:t0275"/>
<dbReference type="KEGG" id="sty:STY2828"/>
<dbReference type="PATRIC" id="fig|220341.7.peg.2876"/>
<dbReference type="eggNOG" id="COG0681">
    <property type="taxonomic scope" value="Bacteria"/>
</dbReference>
<dbReference type="HOGENOM" id="CLU_028723_1_1_6"/>
<dbReference type="OMA" id="FKWAPAR"/>
<dbReference type="OrthoDB" id="9815782at2"/>
<dbReference type="Proteomes" id="UP000000541">
    <property type="component" value="Chromosome"/>
</dbReference>
<dbReference type="Proteomes" id="UP000002670">
    <property type="component" value="Chromosome"/>
</dbReference>
<dbReference type="GO" id="GO:0005886">
    <property type="term" value="C:plasma membrane"/>
    <property type="evidence" value="ECO:0007669"/>
    <property type="project" value="UniProtKB-SubCell"/>
</dbReference>
<dbReference type="GO" id="GO:0004252">
    <property type="term" value="F:serine-type endopeptidase activity"/>
    <property type="evidence" value="ECO:0007669"/>
    <property type="project" value="UniProtKB-EC"/>
</dbReference>
<dbReference type="GO" id="GO:0006465">
    <property type="term" value="P:signal peptide processing"/>
    <property type="evidence" value="ECO:0007669"/>
    <property type="project" value="InterPro"/>
</dbReference>
<dbReference type="CDD" id="cd06530">
    <property type="entry name" value="S26_SPase_I"/>
    <property type="match status" value="1"/>
</dbReference>
<dbReference type="FunFam" id="2.170.230.10:FF:000001">
    <property type="entry name" value="Signal peptidase I"/>
    <property type="match status" value="1"/>
</dbReference>
<dbReference type="Gene3D" id="2.170.230.10">
    <property type="match status" value="1"/>
</dbReference>
<dbReference type="Gene3D" id="2.10.109.10">
    <property type="entry name" value="Umud Fragment, subunit A"/>
    <property type="match status" value="1"/>
</dbReference>
<dbReference type="InterPro" id="IPR036286">
    <property type="entry name" value="LexA/Signal_pep-like_sf"/>
</dbReference>
<dbReference type="InterPro" id="IPR000223">
    <property type="entry name" value="Pept_S26A_signal_pept_1"/>
</dbReference>
<dbReference type="InterPro" id="IPR019758">
    <property type="entry name" value="Pept_S26A_signal_pept_1_CS"/>
</dbReference>
<dbReference type="InterPro" id="IPR019757">
    <property type="entry name" value="Pept_S26A_signal_pept_1_Lys-AS"/>
</dbReference>
<dbReference type="InterPro" id="IPR019756">
    <property type="entry name" value="Pept_S26A_signal_pept_1_Ser-AS"/>
</dbReference>
<dbReference type="InterPro" id="IPR019533">
    <property type="entry name" value="Peptidase_S26"/>
</dbReference>
<dbReference type="InterPro" id="IPR019766">
    <property type="entry name" value="Sign_pep_all-beta_subdom"/>
</dbReference>
<dbReference type="NCBIfam" id="NF008114">
    <property type="entry name" value="PRK10861.1"/>
    <property type="match status" value="1"/>
</dbReference>
<dbReference type="NCBIfam" id="TIGR02227">
    <property type="entry name" value="sigpep_I_bact"/>
    <property type="match status" value="2"/>
</dbReference>
<dbReference type="PANTHER" id="PTHR43390:SF1">
    <property type="entry name" value="CHLOROPLAST PROCESSING PEPTIDASE"/>
    <property type="match status" value="1"/>
</dbReference>
<dbReference type="PANTHER" id="PTHR43390">
    <property type="entry name" value="SIGNAL PEPTIDASE I"/>
    <property type="match status" value="1"/>
</dbReference>
<dbReference type="Pfam" id="PF10502">
    <property type="entry name" value="Peptidase_S26"/>
    <property type="match status" value="1"/>
</dbReference>
<dbReference type="PRINTS" id="PR00727">
    <property type="entry name" value="LEADERPTASE"/>
</dbReference>
<dbReference type="SUPFAM" id="SSF51306">
    <property type="entry name" value="LexA/Signal peptidase"/>
    <property type="match status" value="1"/>
</dbReference>
<dbReference type="PROSITE" id="PS00501">
    <property type="entry name" value="SPASE_I_1"/>
    <property type="match status" value="1"/>
</dbReference>
<dbReference type="PROSITE" id="PS00760">
    <property type="entry name" value="SPASE_I_2"/>
    <property type="match status" value="1"/>
</dbReference>
<dbReference type="PROSITE" id="PS00761">
    <property type="entry name" value="SPASE_I_3"/>
    <property type="match status" value="1"/>
</dbReference>
<gene>
    <name type="primary">lepB</name>
    <name type="ordered locus">STY2828</name>
    <name type="ordered locus">t0275</name>
</gene>
<name>LEP_SALTI</name>
<protein>
    <recommendedName>
        <fullName>Signal peptidase I</fullName>
        <shortName>SPase I</shortName>
        <ecNumber>3.4.21.89</ecNumber>
    </recommendedName>
    <alternativeName>
        <fullName>Leader peptidase I</fullName>
    </alternativeName>
</protein>
<reference key="1">
    <citation type="journal article" date="2001" name="Nature">
        <title>Complete genome sequence of a multiple drug resistant Salmonella enterica serovar Typhi CT18.</title>
        <authorList>
            <person name="Parkhill J."/>
            <person name="Dougan G."/>
            <person name="James K.D."/>
            <person name="Thomson N.R."/>
            <person name="Pickard D."/>
            <person name="Wain J."/>
            <person name="Churcher C.M."/>
            <person name="Mungall K.L."/>
            <person name="Bentley S.D."/>
            <person name="Holden M.T.G."/>
            <person name="Sebaihia M."/>
            <person name="Baker S."/>
            <person name="Basham D."/>
            <person name="Brooks K."/>
            <person name="Chillingworth T."/>
            <person name="Connerton P."/>
            <person name="Cronin A."/>
            <person name="Davis P."/>
            <person name="Davies R.M."/>
            <person name="Dowd L."/>
            <person name="White N."/>
            <person name="Farrar J."/>
            <person name="Feltwell T."/>
            <person name="Hamlin N."/>
            <person name="Haque A."/>
            <person name="Hien T.T."/>
            <person name="Holroyd S."/>
            <person name="Jagels K."/>
            <person name="Krogh A."/>
            <person name="Larsen T.S."/>
            <person name="Leather S."/>
            <person name="Moule S."/>
            <person name="O'Gaora P."/>
            <person name="Parry C."/>
            <person name="Quail M.A."/>
            <person name="Rutherford K.M."/>
            <person name="Simmonds M."/>
            <person name="Skelton J."/>
            <person name="Stevens K."/>
            <person name="Whitehead S."/>
            <person name="Barrell B.G."/>
        </authorList>
    </citation>
    <scope>NUCLEOTIDE SEQUENCE [LARGE SCALE GENOMIC DNA]</scope>
    <source>
        <strain>CT18</strain>
    </source>
</reference>
<reference key="2">
    <citation type="journal article" date="2003" name="J. Bacteriol.">
        <title>Comparative genomics of Salmonella enterica serovar Typhi strains Ty2 and CT18.</title>
        <authorList>
            <person name="Deng W."/>
            <person name="Liou S.-R."/>
            <person name="Plunkett G. III"/>
            <person name="Mayhew G.F."/>
            <person name="Rose D.J."/>
            <person name="Burland V."/>
            <person name="Kodoyianni V."/>
            <person name="Schwartz D.C."/>
            <person name="Blattner F.R."/>
        </authorList>
    </citation>
    <scope>NUCLEOTIDE SEQUENCE [LARGE SCALE GENOMIC DNA]</scope>
    <source>
        <strain>ATCC 700931 / Ty2</strain>
    </source>
</reference>
<keyword id="KW-0997">Cell inner membrane</keyword>
<keyword id="KW-1003">Cell membrane</keyword>
<keyword id="KW-0378">Hydrolase</keyword>
<keyword id="KW-0472">Membrane</keyword>
<keyword id="KW-0645">Protease</keyword>
<keyword id="KW-0812">Transmembrane</keyword>
<keyword id="KW-1133">Transmembrane helix</keyword>
<proteinExistence type="inferred from homology"/>
<accession>P0A1W3</accession>
<accession>P23697</accession>
<comment type="catalytic activity">
    <reaction>
        <text>Cleavage of hydrophobic, N-terminal signal or leader sequences from secreted and periplasmic proteins.</text>
        <dbReference type="EC" id="3.4.21.89"/>
    </reaction>
</comment>
<comment type="subcellular location">
    <subcellularLocation>
        <location evidence="1">Cell inner membrane</location>
        <topology evidence="1">Multi-pass membrane protein</topology>
    </subcellularLocation>
</comment>
<comment type="similarity">
    <text evidence="3">Belongs to the peptidase S26 family.</text>
</comment>